<gene>
    <name type="ordered locus">BURPS668_1231</name>
</gene>
<feature type="chain" id="PRO_1000045286" description="Probable transcriptional regulatory protein BURPS668_1231">
    <location>
        <begin position="1"/>
        <end position="242"/>
    </location>
</feature>
<accession>A3N7F9</accession>
<protein>
    <recommendedName>
        <fullName evidence="1">Probable transcriptional regulatory protein BURPS668_1231</fullName>
    </recommendedName>
</protein>
<organism>
    <name type="scientific">Burkholderia pseudomallei (strain 668)</name>
    <dbReference type="NCBI Taxonomy" id="320373"/>
    <lineage>
        <taxon>Bacteria</taxon>
        <taxon>Pseudomonadati</taxon>
        <taxon>Pseudomonadota</taxon>
        <taxon>Betaproteobacteria</taxon>
        <taxon>Burkholderiales</taxon>
        <taxon>Burkholderiaceae</taxon>
        <taxon>Burkholderia</taxon>
        <taxon>pseudomallei group</taxon>
    </lineage>
</organism>
<keyword id="KW-0963">Cytoplasm</keyword>
<keyword id="KW-0238">DNA-binding</keyword>
<keyword id="KW-0804">Transcription</keyword>
<keyword id="KW-0805">Transcription regulation</keyword>
<evidence type="ECO:0000255" key="1">
    <source>
        <dbReference type="HAMAP-Rule" id="MF_00693"/>
    </source>
</evidence>
<comment type="subcellular location">
    <subcellularLocation>
        <location evidence="1">Cytoplasm</location>
    </subcellularLocation>
</comment>
<comment type="similarity">
    <text evidence="1">Belongs to the TACO1 family.</text>
</comment>
<proteinExistence type="inferred from homology"/>
<name>Y1231_BURP6</name>
<sequence length="242" mass="26122">MAGHSKWANIKHKKAAADAKRGKIWTRLIKEIQVAARLGGGDVNSNPRLRLAVDKAADANMPKDNVKRAIDRGVGGADGANYEEIRYEGYGIGGAAIIVDTLTDNRTRTVAEVRHAFSKFGGNMGTDGSVAFMFDHVGQFLFAPGTSEDALMEAALEAGANDVNTNDDGSIEVLCDWQEFSKVKDALEAAGFKAELAEVTMKPQNEVDFTGEDAVKMQKLLDALENLDDVQEVYTNAVVVEE</sequence>
<dbReference type="EMBL" id="CP000570">
    <property type="protein sequence ID" value="ABN82135.1"/>
    <property type="molecule type" value="Genomic_DNA"/>
</dbReference>
<dbReference type="RefSeq" id="WP_004185607.1">
    <property type="nucleotide sequence ID" value="NC_009074.1"/>
</dbReference>
<dbReference type="SMR" id="A3N7F9"/>
<dbReference type="KEGG" id="bpd:BURPS668_1231"/>
<dbReference type="HOGENOM" id="CLU_062974_2_2_4"/>
<dbReference type="GO" id="GO:0005829">
    <property type="term" value="C:cytosol"/>
    <property type="evidence" value="ECO:0007669"/>
    <property type="project" value="TreeGrafter"/>
</dbReference>
<dbReference type="GO" id="GO:0003677">
    <property type="term" value="F:DNA binding"/>
    <property type="evidence" value="ECO:0007669"/>
    <property type="project" value="UniProtKB-UniRule"/>
</dbReference>
<dbReference type="GO" id="GO:0006355">
    <property type="term" value="P:regulation of DNA-templated transcription"/>
    <property type="evidence" value="ECO:0007669"/>
    <property type="project" value="UniProtKB-UniRule"/>
</dbReference>
<dbReference type="FunFam" id="1.10.10.200:FF:000001">
    <property type="entry name" value="Probable transcriptional regulatory protein YebC"/>
    <property type="match status" value="1"/>
</dbReference>
<dbReference type="FunFam" id="3.30.70.980:FF:000002">
    <property type="entry name" value="Probable transcriptional regulatory protein YebC"/>
    <property type="match status" value="1"/>
</dbReference>
<dbReference type="Gene3D" id="1.10.10.200">
    <property type="match status" value="1"/>
</dbReference>
<dbReference type="Gene3D" id="3.30.70.980">
    <property type="match status" value="2"/>
</dbReference>
<dbReference type="HAMAP" id="MF_00693">
    <property type="entry name" value="Transcrip_reg_TACO1"/>
    <property type="match status" value="1"/>
</dbReference>
<dbReference type="InterPro" id="IPR017856">
    <property type="entry name" value="Integrase-like_N"/>
</dbReference>
<dbReference type="InterPro" id="IPR048300">
    <property type="entry name" value="TACO1_YebC-like_2nd/3rd_dom"/>
</dbReference>
<dbReference type="InterPro" id="IPR049083">
    <property type="entry name" value="TACO1_YebC_N"/>
</dbReference>
<dbReference type="InterPro" id="IPR002876">
    <property type="entry name" value="Transcrip_reg_TACO1-like"/>
</dbReference>
<dbReference type="InterPro" id="IPR026564">
    <property type="entry name" value="Transcrip_reg_TACO1-like_dom3"/>
</dbReference>
<dbReference type="InterPro" id="IPR029072">
    <property type="entry name" value="YebC-like"/>
</dbReference>
<dbReference type="NCBIfam" id="NF001030">
    <property type="entry name" value="PRK00110.1"/>
    <property type="match status" value="1"/>
</dbReference>
<dbReference type="NCBIfam" id="NF009044">
    <property type="entry name" value="PRK12378.1"/>
    <property type="match status" value="1"/>
</dbReference>
<dbReference type="NCBIfam" id="TIGR01033">
    <property type="entry name" value="YebC/PmpR family DNA-binding transcriptional regulator"/>
    <property type="match status" value="1"/>
</dbReference>
<dbReference type="PANTHER" id="PTHR12532:SF6">
    <property type="entry name" value="TRANSCRIPTIONAL REGULATORY PROTEIN YEBC-RELATED"/>
    <property type="match status" value="1"/>
</dbReference>
<dbReference type="PANTHER" id="PTHR12532">
    <property type="entry name" value="TRANSLATIONAL ACTIVATOR OF CYTOCHROME C OXIDASE 1"/>
    <property type="match status" value="1"/>
</dbReference>
<dbReference type="Pfam" id="PF20772">
    <property type="entry name" value="TACO1_YebC_N"/>
    <property type="match status" value="1"/>
</dbReference>
<dbReference type="Pfam" id="PF01709">
    <property type="entry name" value="Transcrip_reg"/>
    <property type="match status" value="1"/>
</dbReference>
<dbReference type="SUPFAM" id="SSF75625">
    <property type="entry name" value="YebC-like"/>
    <property type="match status" value="1"/>
</dbReference>
<reference key="1">
    <citation type="journal article" date="2010" name="Genome Biol. Evol.">
        <title>Continuing evolution of Burkholderia mallei through genome reduction and large-scale rearrangements.</title>
        <authorList>
            <person name="Losada L."/>
            <person name="Ronning C.M."/>
            <person name="DeShazer D."/>
            <person name="Woods D."/>
            <person name="Fedorova N."/>
            <person name="Kim H.S."/>
            <person name="Shabalina S.A."/>
            <person name="Pearson T.R."/>
            <person name="Brinkac L."/>
            <person name="Tan P."/>
            <person name="Nandi T."/>
            <person name="Crabtree J."/>
            <person name="Badger J."/>
            <person name="Beckstrom-Sternberg S."/>
            <person name="Saqib M."/>
            <person name="Schutzer S.E."/>
            <person name="Keim P."/>
            <person name="Nierman W.C."/>
        </authorList>
    </citation>
    <scope>NUCLEOTIDE SEQUENCE [LARGE SCALE GENOMIC DNA]</scope>
    <source>
        <strain>668</strain>
    </source>
</reference>